<accession>A6L852</accession>
<comment type="function">
    <text evidence="1">Regulates arginine biosynthesis genes.</text>
</comment>
<comment type="pathway">
    <text>Amino-acid biosynthesis; L-arginine biosynthesis [regulation].</text>
</comment>
<comment type="subcellular location">
    <subcellularLocation>
        <location evidence="1">Cytoplasm</location>
    </subcellularLocation>
</comment>
<comment type="similarity">
    <text evidence="1">Belongs to the ArgR family.</text>
</comment>
<sequence>MSTKKERLDAICGIIQTKVISNQEELLKELEDSGFSVTQATLSRDIKQLKVAKVHDGNGDYVYRLPEESISKQAQPEGKKKPNIEFSGNLAVVKTRPGYAMGIASDIDSHAPSEILATIAGDDTILVIPRNGVSQEKVIAALSHFI</sequence>
<reference key="1">
    <citation type="journal article" date="2007" name="PLoS Biol.">
        <title>Evolution of symbiotic bacteria in the distal human intestine.</title>
        <authorList>
            <person name="Xu J."/>
            <person name="Mahowald M.A."/>
            <person name="Ley R.E."/>
            <person name="Lozupone C.A."/>
            <person name="Hamady M."/>
            <person name="Martens E.C."/>
            <person name="Henrissat B."/>
            <person name="Coutinho P.M."/>
            <person name="Minx P."/>
            <person name="Latreille P."/>
            <person name="Cordum H."/>
            <person name="Van Brunt A."/>
            <person name="Kim K."/>
            <person name="Fulton R.S."/>
            <person name="Fulton L.A."/>
            <person name="Clifton S.W."/>
            <person name="Wilson R.K."/>
            <person name="Knight R.D."/>
            <person name="Gordon J.I."/>
        </authorList>
    </citation>
    <scope>NUCLEOTIDE SEQUENCE [LARGE SCALE GENOMIC DNA]</scope>
    <source>
        <strain>ATCC 8503 / DSM 20701 / CIP 104284 / JCM 5825 / NCTC 11152</strain>
    </source>
</reference>
<dbReference type="EMBL" id="CP000140">
    <property type="protein sequence ID" value="ABR41866.1"/>
    <property type="molecule type" value="Genomic_DNA"/>
</dbReference>
<dbReference type="RefSeq" id="WP_005855227.1">
    <property type="nucleotide sequence ID" value="NC_009615.1"/>
</dbReference>
<dbReference type="SMR" id="A6L852"/>
<dbReference type="STRING" id="435591.BDI_0071"/>
<dbReference type="PaxDb" id="435591-BDI_0071"/>
<dbReference type="KEGG" id="pdi:BDI_0071"/>
<dbReference type="eggNOG" id="COG1438">
    <property type="taxonomic scope" value="Bacteria"/>
</dbReference>
<dbReference type="HOGENOM" id="CLU_097103_0_0_10"/>
<dbReference type="BioCyc" id="PDIS435591:G1G5A-71-MONOMER"/>
<dbReference type="UniPathway" id="UPA00068"/>
<dbReference type="Proteomes" id="UP000000566">
    <property type="component" value="Chromosome"/>
</dbReference>
<dbReference type="GO" id="GO:0005737">
    <property type="term" value="C:cytoplasm"/>
    <property type="evidence" value="ECO:0007669"/>
    <property type="project" value="UniProtKB-SubCell"/>
</dbReference>
<dbReference type="GO" id="GO:0034618">
    <property type="term" value="F:arginine binding"/>
    <property type="evidence" value="ECO:0007669"/>
    <property type="project" value="InterPro"/>
</dbReference>
<dbReference type="GO" id="GO:0003677">
    <property type="term" value="F:DNA binding"/>
    <property type="evidence" value="ECO:0007669"/>
    <property type="project" value="UniProtKB-KW"/>
</dbReference>
<dbReference type="GO" id="GO:0003700">
    <property type="term" value="F:DNA-binding transcription factor activity"/>
    <property type="evidence" value="ECO:0007669"/>
    <property type="project" value="UniProtKB-UniRule"/>
</dbReference>
<dbReference type="GO" id="GO:0006526">
    <property type="term" value="P:L-arginine biosynthetic process"/>
    <property type="evidence" value="ECO:0007669"/>
    <property type="project" value="UniProtKB-UniPathway"/>
</dbReference>
<dbReference type="GO" id="GO:0051259">
    <property type="term" value="P:protein complex oligomerization"/>
    <property type="evidence" value="ECO:0007669"/>
    <property type="project" value="InterPro"/>
</dbReference>
<dbReference type="GO" id="GO:1900079">
    <property type="term" value="P:regulation of arginine biosynthetic process"/>
    <property type="evidence" value="ECO:0007669"/>
    <property type="project" value="UniProtKB-UniRule"/>
</dbReference>
<dbReference type="Gene3D" id="3.30.1360.40">
    <property type="match status" value="1"/>
</dbReference>
<dbReference type="Gene3D" id="1.10.10.10">
    <property type="entry name" value="Winged helix-like DNA-binding domain superfamily/Winged helix DNA-binding domain"/>
    <property type="match status" value="1"/>
</dbReference>
<dbReference type="HAMAP" id="MF_00173">
    <property type="entry name" value="Arg_repressor"/>
    <property type="match status" value="1"/>
</dbReference>
<dbReference type="InterPro" id="IPR001669">
    <property type="entry name" value="Arg_repress"/>
</dbReference>
<dbReference type="InterPro" id="IPR020899">
    <property type="entry name" value="Arg_repress_C"/>
</dbReference>
<dbReference type="InterPro" id="IPR036251">
    <property type="entry name" value="Arg_repress_C_sf"/>
</dbReference>
<dbReference type="InterPro" id="IPR020900">
    <property type="entry name" value="Arg_repress_DNA-bd"/>
</dbReference>
<dbReference type="InterPro" id="IPR036388">
    <property type="entry name" value="WH-like_DNA-bd_sf"/>
</dbReference>
<dbReference type="InterPro" id="IPR036390">
    <property type="entry name" value="WH_DNA-bd_sf"/>
</dbReference>
<dbReference type="PANTHER" id="PTHR34471">
    <property type="entry name" value="ARGININE REPRESSOR"/>
    <property type="match status" value="1"/>
</dbReference>
<dbReference type="PANTHER" id="PTHR34471:SF1">
    <property type="entry name" value="ARGININE REPRESSOR"/>
    <property type="match status" value="1"/>
</dbReference>
<dbReference type="Pfam" id="PF01316">
    <property type="entry name" value="Arg_repressor"/>
    <property type="match status" value="1"/>
</dbReference>
<dbReference type="Pfam" id="PF02863">
    <property type="entry name" value="Arg_repressor_C"/>
    <property type="match status" value="1"/>
</dbReference>
<dbReference type="PRINTS" id="PR01467">
    <property type="entry name" value="ARGREPRESSOR"/>
</dbReference>
<dbReference type="SUPFAM" id="SSF55252">
    <property type="entry name" value="C-terminal domain of arginine repressor"/>
    <property type="match status" value="1"/>
</dbReference>
<dbReference type="SUPFAM" id="SSF46785">
    <property type="entry name" value="Winged helix' DNA-binding domain"/>
    <property type="match status" value="1"/>
</dbReference>
<feature type="chain" id="PRO_1000023583" description="Arginine repressor">
    <location>
        <begin position="1"/>
        <end position="146"/>
    </location>
</feature>
<proteinExistence type="inferred from homology"/>
<gene>
    <name evidence="1" type="primary">argR</name>
    <name type="ordered locus">BDI_0071</name>
</gene>
<name>ARGR_PARD8</name>
<evidence type="ECO:0000255" key="1">
    <source>
        <dbReference type="HAMAP-Rule" id="MF_00173"/>
    </source>
</evidence>
<protein>
    <recommendedName>
        <fullName evidence="1">Arginine repressor</fullName>
    </recommendedName>
</protein>
<keyword id="KW-0028">Amino-acid biosynthesis</keyword>
<keyword id="KW-0055">Arginine biosynthesis</keyword>
<keyword id="KW-0963">Cytoplasm</keyword>
<keyword id="KW-0238">DNA-binding</keyword>
<keyword id="KW-1185">Reference proteome</keyword>
<keyword id="KW-0678">Repressor</keyword>
<keyword id="KW-0804">Transcription</keyword>
<keyword id="KW-0805">Transcription regulation</keyword>
<organism>
    <name type="scientific">Parabacteroides distasonis (strain ATCC 8503 / DSM 20701 / CIP 104284 / JCM 5825 / NCTC 11152)</name>
    <dbReference type="NCBI Taxonomy" id="435591"/>
    <lineage>
        <taxon>Bacteria</taxon>
        <taxon>Pseudomonadati</taxon>
        <taxon>Bacteroidota</taxon>
        <taxon>Bacteroidia</taxon>
        <taxon>Bacteroidales</taxon>
        <taxon>Tannerellaceae</taxon>
        <taxon>Parabacteroides</taxon>
    </lineage>
</organism>